<evidence type="ECO:0000255" key="1"/>
<evidence type="ECO:0000305" key="2"/>
<feature type="chain" id="PRO_0000262556" description="Secernin-2">
    <location>
        <begin position="1"/>
        <end position="428"/>
    </location>
</feature>
<feature type="active site" evidence="1">
    <location>
        <position position="10"/>
    </location>
</feature>
<accession>Q5XH17</accession>
<protein>
    <recommendedName>
        <fullName>Secernin-2</fullName>
    </recommendedName>
</protein>
<keyword id="KW-1185">Reference proteome</keyword>
<organism>
    <name type="scientific">Xenopus laevis</name>
    <name type="common">African clawed frog</name>
    <dbReference type="NCBI Taxonomy" id="8355"/>
    <lineage>
        <taxon>Eukaryota</taxon>
        <taxon>Metazoa</taxon>
        <taxon>Chordata</taxon>
        <taxon>Craniata</taxon>
        <taxon>Vertebrata</taxon>
        <taxon>Euteleostomi</taxon>
        <taxon>Amphibia</taxon>
        <taxon>Batrachia</taxon>
        <taxon>Anura</taxon>
        <taxon>Pipoidea</taxon>
        <taxon>Pipidae</taxon>
        <taxon>Xenopodinae</taxon>
        <taxon>Xenopus</taxon>
        <taxon>Xenopus</taxon>
    </lineage>
</organism>
<reference key="1">
    <citation type="submission" date="2004-10" db="EMBL/GenBank/DDBJ databases">
        <authorList>
            <consortium name="NIH - Xenopus Gene Collection (XGC) project"/>
        </authorList>
    </citation>
    <scope>NUCLEOTIDE SEQUENCE [LARGE SCALE MRNA]</scope>
    <source>
        <tissue>Kidney</tissue>
    </source>
</reference>
<proteinExistence type="evidence at transcript level"/>
<comment type="similarity">
    <text evidence="2">Belongs to the peptidase C69 family. Secernin subfamily.</text>
</comment>
<sequence length="428" mass="48086">MSSSLPPSSCDCFVSLPPASLSSFVLFGKNSDRPRDEVQEIVYYPAASHPLGSKVKCTFIEVEQVRETLAVVLSRPAWLWGAEMGANEMGVCIGNEAVWTKEPVTEGEALLGMDLVRLALERGPSAQKAVQVITELLGEYGQGGSCREEPEPFIYHNTFLLCDRSEAYVLETAGPYWAAERIVEGARNLSNQLSISVCPWSEHPQLRSHALQQGWWDGQGEFNFSVVYSLEKQPERMAAAKLRYRAGQELLRMQEGHMTVKSMQSILRDKESGICMDSGGFRTTSSMVSVLPRSPHEPCIHLLSATPDPSRSVYKPFMFSPRVTQVPWVLSPTFGEQDPVNQIPRFQTQVDRRHELYRQHQRALEACKGNKEAEETLRQKQLKVEEENLHWVDTFLDTSKSADPVGGSDIFRICVEKELALYKETGEK</sequence>
<name>SCRN2_XENLA</name>
<dbReference type="EMBL" id="BC084258">
    <property type="protein sequence ID" value="AAH84258.1"/>
    <property type="molecule type" value="mRNA"/>
</dbReference>
<dbReference type="RefSeq" id="NP_001088260.1">
    <property type="nucleotide sequence ID" value="NM_001094791.1"/>
</dbReference>
<dbReference type="SMR" id="Q5XH17"/>
<dbReference type="DNASU" id="495091"/>
<dbReference type="GeneID" id="495091"/>
<dbReference type="KEGG" id="xla:495091"/>
<dbReference type="AGR" id="Xenbase:XB-GENE-1005955"/>
<dbReference type="CTD" id="495091"/>
<dbReference type="Xenbase" id="XB-GENE-1005955">
    <property type="gene designation" value="scrn2.S"/>
</dbReference>
<dbReference type="OrthoDB" id="5175656at2759"/>
<dbReference type="Proteomes" id="UP000186698">
    <property type="component" value="Chromosome 9_10S"/>
</dbReference>
<dbReference type="Bgee" id="495091">
    <property type="expression patterns" value="Expressed in muscle tissue and 16 other cell types or tissues"/>
</dbReference>
<dbReference type="GO" id="GO:0070004">
    <property type="term" value="F:cysteine-type exopeptidase activity"/>
    <property type="evidence" value="ECO:0007669"/>
    <property type="project" value="InterPro"/>
</dbReference>
<dbReference type="GO" id="GO:0016805">
    <property type="term" value="F:dipeptidase activity"/>
    <property type="evidence" value="ECO:0007669"/>
    <property type="project" value="InterPro"/>
</dbReference>
<dbReference type="GO" id="GO:0006508">
    <property type="term" value="P:proteolysis"/>
    <property type="evidence" value="ECO:0007669"/>
    <property type="project" value="InterPro"/>
</dbReference>
<dbReference type="FunFam" id="3.60.60.10:FF:000001">
    <property type="entry name" value="Secernin 1"/>
    <property type="match status" value="1"/>
</dbReference>
<dbReference type="Gene3D" id="3.60.60.10">
    <property type="entry name" value="Penicillin V Acylase, Chain A"/>
    <property type="match status" value="1"/>
</dbReference>
<dbReference type="InterPro" id="IPR005322">
    <property type="entry name" value="Peptidase_C69"/>
</dbReference>
<dbReference type="PANTHER" id="PTHR12994">
    <property type="entry name" value="SECERNIN"/>
    <property type="match status" value="1"/>
</dbReference>
<dbReference type="PANTHER" id="PTHR12994:SF16">
    <property type="entry name" value="SECERNIN-2"/>
    <property type="match status" value="1"/>
</dbReference>
<dbReference type="Pfam" id="PF03577">
    <property type="entry name" value="Peptidase_C69"/>
    <property type="match status" value="1"/>
</dbReference>
<gene>
    <name type="primary">scrn2</name>
</gene>